<accession>A1W091</accession>
<name>ISPE_CAMJJ</name>
<gene>
    <name evidence="1" type="primary">ispE</name>
    <name type="ordered locus">CJJ81176_1122</name>
</gene>
<evidence type="ECO:0000255" key="1">
    <source>
        <dbReference type="HAMAP-Rule" id="MF_00061"/>
    </source>
</evidence>
<feature type="chain" id="PRO_1000007829" description="4-diphosphocytidyl-2-C-methyl-D-erythritol kinase">
    <location>
        <begin position="1"/>
        <end position="255"/>
    </location>
</feature>
<feature type="active site" evidence="1">
    <location>
        <position position="6"/>
    </location>
</feature>
<feature type="active site" evidence="1">
    <location>
        <position position="137"/>
    </location>
</feature>
<feature type="binding site" evidence="1">
    <location>
        <begin position="95"/>
        <end position="105"/>
    </location>
    <ligand>
        <name>ATP</name>
        <dbReference type="ChEBI" id="CHEBI:30616"/>
    </ligand>
</feature>
<comment type="function">
    <text evidence="1">Catalyzes the phosphorylation of the position 2 hydroxy group of 4-diphosphocytidyl-2C-methyl-D-erythritol.</text>
</comment>
<comment type="catalytic activity">
    <reaction evidence="1">
        <text>4-CDP-2-C-methyl-D-erythritol + ATP = 4-CDP-2-C-methyl-D-erythritol 2-phosphate + ADP + H(+)</text>
        <dbReference type="Rhea" id="RHEA:18437"/>
        <dbReference type="ChEBI" id="CHEBI:15378"/>
        <dbReference type="ChEBI" id="CHEBI:30616"/>
        <dbReference type="ChEBI" id="CHEBI:57823"/>
        <dbReference type="ChEBI" id="CHEBI:57919"/>
        <dbReference type="ChEBI" id="CHEBI:456216"/>
        <dbReference type="EC" id="2.7.1.148"/>
    </reaction>
</comment>
<comment type="pathway">
    <text evidence="1">Isoprenoid biosynthesis; isopentenyl diphosphate biosynthesis via DXP pathway; isopentenyl diphosphate from 1-deoxy-D-xylulose 5-phosphate: step 3/6.</text>
</comment>
<comment type="similarity">
    <text evidence="1">Belongs to the GHMP kinase family. IspE subfamily.</text>
</comment>
<reference key="1">
    <citation type="submission" date="2006-12" db="EMBL/GenBank/DDBJ databases">
        <authorList>
            <person name="Fouts D.E."/>
            <person name="Nelson K.E."/>
            <person name="Sebastian Y."/>
        </authorList>
    </citation>
    <scope>NUCLEOTIDE SEQUENCE [LARGE SCALE GENOMIC DNA]</scope>
    <source>
        <strain>81-176</strain>
    </source>
</reference>
<organism>
    <name type="scientific">Campylobacter jejuni subsp. jejuni serotype O:23/36 (strain 81-176)</name>
    <dbReference type="NCBI Taxonomy" id="354242"/>
    <lineage>
        <taxon>Bacteria</taxon>
        <taxon>Pseudomonadati</taxon>
        <taxon>Campylobacterota</taxon>
        <taxon>Epsilonproteobacteria</taxon>
        <taxon>Campylobacterales</taxon>
        <taxon>Campylobacteraceae</taxon>
        <taxon>Campylobacter</taxon>
    </lineage>
</organism>
<sequence length="255" mass="29228">MKAYAKANIFLKLTGFDSRKYHLLESRFILLKDVFDELELVDKESDSKKEFEIISNFKCENNIIQKAYLLLSKRYNNELKELFSKKSLKLTKNIPVCAGLGGGSSDCASFLLLMNETLNLKLNLQELINLSIQLGSDIAFFLSGFHSANVSGCGEIIEEFEDDIPNLKWTFPQISCQTKAVYDEFDRGIFDFQKNNNQAQIYKKLSTKELLQNFKNKELNDLFTPCATLYPKMKSYLQEDFFLSGSGSSVFKVDR</sequence>
<keyword id="KW-0067">ATP-binding</keyword>
<keyword id="KW-0414">Isoprene biosynthesis</keyword>
<keyword id="KW-0418">Kinase</keyword>
<keyword id="KW-0547">Nucleotide-binding</keyword>
<keyword id="KW-0808">Transferase</keyword>
<protein>
    <recommendedName>
        <fullName evidence="1">4-diphosphocytidyl-2-C-methyl-D-erythritol kinase</fullName>
        <shortName evidence="1">CMK</shortName>
        <ecNumber evidence="1">2.7.1.148</ecNumber>
    </recommendedName>
    <alternativeName>
        <fullName evidence="1">4-(cytidine-5'-diphospho)-2-C-methyl-D-erythritol kinase</fullName>
    </alternativeName>
</protein>
<dbReference type="EC" id="2.7.1.148" evidence="1"/>
<dbReference type="EMBL" id="CP000538">
    <property type="protein sequence ID" value="EAQ72218.1"/>
    <property type="molecule type" value="Genomic_DNA"/>
</dbReference>
<dbReference type="RefSeq" id="WP_002869041.1">
    <property type="nucleotide sequence ID" value="NC_008787.1"/>
</dbReference>
<dbReference type="SMR" id="A1W091"/>
<dbReference type="KEGG" id="cjj:CJJ81176_1122"/>
<dbReference type="eggNOG" id="COG1947">
    <property type="taxonomic scope" value="Bacteria"/>
</dbReference>
<dbReference type="HOGENOM" id="CLU_053057_2_2_7"/>
<dbReference type="UniPathway" id="UPA00056">
    <property type="reaction ID" value="UER00094"/>
</dbReference>
<dbReference type="Proteomes" id="UP000000646">
    <property type="component" value="Chromosome"/>
</dbReference>
<dbReference type="GO" id="GO:0050515">
    <property type="term" value="F:4-(cytidine 5'-diphospho)-2-C-methyl-D-erythritol kinase activity"/>
    <property type="evidence" value="ECO:0007669"/>
    <property type="project" value="UniProtKB-UniRule"/>
</dbReference>
<dbReference type="GO" id="GO:0005524">
    <property type="term" value="F:ATP binding"/>
    <property type="evidence" value="ECO:0007669"/>
    <property type="project" value="UniProtKB-UniRule"/>
</dbReference>
<dbReference type="GO" id="GO:0019288">
    <property type="term" value="P:isopentenyl diphosphate biosynthetic process, methylerythritol 4-phosphate pathway"/>
    <property type="evidence" value="ECO:0007669"/>
    <property type="project" value="UniProtKB-UniRule"/>
</dbReference>
<dbReference type="GO" id="GO:0016114">
    <property type="term" value="P:terpenoid biosynthetic process"/>
    <property type="evidence" value="ECO:0007669"/>
    <property type="project" value="InterPro"/>
</dbReference>
<dbReference type="Gene3D" id="3.30.230.10">
    <property type="match status" value="1"/>
</dbReference>
<dbReference type="Gene3D" id="3.30.70.890">
    <property type="entry name" value="GHMP kinase, C-terminal domain"/>
    <property type="match status" value="1"/>
</dbReference>
<dbReference type="HAMAP" id="MF_00061">
    <property type="entry name" value="IspE"/>
    <property type="match status" value="1"/>
</dbReference>
<dbReference type="InterPro" id="IPR036554">
    <property type="entry name" value="GHMP_kinase_C_sf"/>
</dbReference>
<dbReference type="InterPro" id="IPR006204">
    <property type="entry name" value="GHMP_kinase_N_dom"/>
</dbReference>
<dbReference type="InterPro" id="IPR004424">
    <property type="entry name" value="IspE"/>
</dbReference>
<dbReference type="InterPro" id="IPR020568">
    <property type="entry name" value="Ribosomal_Su5_D2-typ_SF"/>
</dbReference>
<dbReference type="InterPro" id="IPR014721">
    <property type="entry name" value="Ribsml_uS5_D2-typ_fold_subgr"/>
</dbReference>
<dbReference type="NCBIfam" id="TIGR00154">
    <property type="entry name" value="ispE"/>
    <property type="match status" value="1"/>
</dbReference>
<dbReference type="NCBIfam" id="NF003216">
    <property type="entry name" value="PRK04181.1"/>
    <property type="match status" value="1"/>
</dbReference>
<dbReference type="PANTHER" id="PTHR43527">
    <property type="entry name" value="4-DIPHOSPHOCYTIDYL-2-C-METHYL-D-ERYTHRITOL KINASE, CHLOROPLASTIC"/>
    <property type="match status" value="1"/>
</dbReference>
<dbReference type="PANTHER" id="PTHR43527:SF2">
    <property type="entry name" value="4-DIPHOSPHOCYTIDYL-2-C-METHYL-D-ERYTHRITOL KINASE, CHLOROPLASTIC"/>
    <property type="match status" value="1"/>
</dbReference>
<dbReference type="Pfam" id="PF00288">
    <property type="entry name" value="GHMP_kinases_N"/>
    <property type="match status" value="1"/>
</dbReference>
<dbReference type="PIRSF" id="PIRSF010376">
    <property type="entry name" value="IspE"/>
    <property type="match status" value="1"/>
</dbReference>
<dbReference type="SUPFAM" id="SSF55060">
    <property type="entry name" value="GHMP Kinase, C-terminal domain"/>
    <property type="match status" value="1"/>
</dbReference>
<dbReference type="SUPFAM" id="SSF54211">
    <property type="entry name" value="Ribosomal protein S5 domain 2-like"/>
    <property type="match status" value="1"/>
</dbReference>
<proteinExistence type="inferred from homology"/>